<sequence length="272" mass="30329">MARLAAFDMDGTLLMPDHHLGEKTLSTLARLRERDITLTFATGRHALEMQHILGALSLDAYLITGNGTRVHSLEGELLHRDDLPADVAELVLYQQWDTRASMHIFNDDGWFTGKEIPALLQAFVYSGFRYQIIDVKKMPLGSVTKICFCGDHDDLTRLQIQLYEALGERAHLCFSATDCLEVLPVGCNKGAALTVLTQHLGLSLRDCMAFGDAMNDREMLGSVGSGFIMGNAMPQLRAELPHLPVIGHCRNQAVSHYLTHWLDYPHLPYSPE</sequence>
<accession>B7UJR9</accession>
<gene>
    <name evidence="1" type="primary">cof</name>
    <name type="ordered locus">E2348C_0381</name>
</gene>
<reference key="1">
    <citation type="journal article" date="2009" name="J. Bacteriol.">
        <title>Complete genome sequence and comparative genome analysis of enteropathogenic Escherichia coli O127:H6 strain E2348/69.</title>
        <authorList>
            <person name="Iguchi A."/>
            <person name="Thomson N.R."/>
            <person name="Ogura Y."/>
            <person name="Saunders D."/>
            <person name="Ooka T."/>
            <person name="Henderson I.R."/>
            <person name="Harris D."/>
            <person name="Asadulghani M."/>
            <person name="Kurokawa K."/>
            <person name="Dean P."/>
            <person name="Kenny B."/>
            <person name="Quail M.A."/>
            <person name="Thurston S."/>
            <person name="Dougan G."/>
            <person name="Hayashi T."/>
            <person name="Parkhill J."/>
            <person name="Frankel G."/>
        </authorList>
    </citation>
    <scope>NUCLEOTIDE SEQUENCE [LARGE SCALE GENOMIC DNA]</scope>
    <source>
        <strain>E2348/69 / EPEC</strain>
    </source>
</reference>
<comment type="function">
    <text evidence="1">Catalyzes the hydrolysis of 4-amino-2-methyl-5-hydroxymethylpyrimidine pyrophosphate (HMP-PP) to 4-amino-2-methyl-5-hydroxymethylpyrimidine phosphate (HMP-P).</text>
</comment>
<comment type="catalytic activity">
    <reaction evidence="1">
        <text>4-amino-2-methyl-5-(diphosphooxymethyl)pyrimidine + H2O = 4-amino-2-methyl-5-(phosphooxymethyl)pyrimidine + phosphate + H(+)</text>
        <dbReference type="Rhea" id="RHEA:27914"/>
        <dbReference type="ChEBI" id="CHEBI:15377"/>
        <dbReference type="ChEBI" id="CHEBI:15378"/>
        <dbReference type="ChEBI" id="CHEBI:43474"/>
        <dbReference type="ChEBI" id="CHEBI:57841"/>
        <dbReference type="ChEBI" id="CHEBI:58354"/>
    </reaction>
</comment>
<comment type="cofactor">
    <cofactor evidence="1">
        <name>Mg(2+)</name>
        <dbReference type="ChEBI" id="CHEBI:18420"/>
    </cofactor>
</comment>
<comment type="similarity">
    <text evidence="1">Belongs to the HAD-like hydrolase superfamily. Cof family.</text>
</comment>
<proteinExistence type="inferred from homology"/>
<protein>
    <recommendedName>
        <fullName evidence="1">HMP-PP phosphatase</fullName>
        <ecNumber evidence="1">3.6.1.-</ecNumber>
    </recommendedName>
</protein>
<feature type="chain" id="PRO_1000188495" description="HMP-PP phosphatase">
    <location>
        <begin position="1"/>
        <end position="272"/>
    </location>
</feature>
<feature type="active site" description="Nucleophile" evidence="1">
    <location>
        <position position="8"/>
    </location>
</feature>
<feature type="binding site" evidence="1">
    <location>
        <position position="8"/>
    </location>
    <ligand>
        <name>Mg(2+)</name>
        <dbReference type="ChEBI" id="CHEBI:18420"/>
    </ligand>
</feature>
<feature type="binding site" evidence="1">
    <location>
        <position position="10"/>
    </location>
    <ligand>
        <name>Mg(2+)</name>
        <dbReference type="ChEBI" id="CHEBI:18420"/>
    </ligand>
</feature>
<feature type="binding site" evidence="1">
    <location>
        <position position="212"/>
    </location>
    <ligand>
        <name>Mg(2+)</name>
        <dbReference type="ChEBI" id="CHEBI:18420"/>
    </ligand>
</feature>
<name>COF_ECO27</name>
<organism>
    <name type="scientific">Escherichia coli O127:H6 (strain E2348/69 / EPEC)</name>
    <dbReference type="NCBI Taxonomy" id="574521"/>
    <lineage>
        <taxon>Bacteria</taxon>
        <taxon>Pseudomonadati</taxon>
        <taxon>Pseudomonadota</taxon>
        <taxon>Gammaproteobacteria</taxon>
        <taxon>Enterobacterales</taxon>
        <taxon>Enterobacteriaceae</taxon>
        <taxon>Escherichia</taxon>
    </lineage>
</organism>
<evidence type="ECO:0000255" key="1">
    <source>
        <dbReference type="HAMAP-Rule" id="MF_01847"/>
    </source>
</evidence>
<dbReference type="EC" id="3.6.1.-" evidence="1"/>
<dbReference type="EMBL" id="FM180568">
    <property type="protein sequence ID" value="CAS07929.1"/>
    <property type="molecule type" value="Genomic_DNA"/>
</dbReference>
<dbReference type="RefSeq" id="WP_000113027.1">
    <property type="nucleotide sequence ID" value="NC_011601.1"/>
</dbReference>
<dbReference type="SMR" id="B7UJR9"/>
<dbReference type="GeneID" id="93777004"/>
<dbReference type="KEGG" id="ecg:E2348C_0381"/>
<dbReference type="HOGENOM" id="CLU_044146_5_2_6"/>
<dbReference type="Proteomes" id="UP000008205">
    <property type="component" value="Chromosome"/>
</dbReference>
<dbReference type="GO" id="GO:0002145">
    <property type="term" value="F:4-amino-5-hydroxymethyl-2-methylpyrimidine diphosphatase activity"/>
    <property type="evidence" value="ECO:0007669"/>
    <property type="project" value="RHEA"/>
</dbReference>
<dbReference type="GO" id="GO:0000287">
    <property type="term" value="F:magnesium ion binding"/>
    <property type="evidence" value="ECO:0000250"/>
    <property type="project" value="UniProtKB"/>
</dbReference>
<dbReference type="GO" id="GO:0016791">
    <property type="term" value="F:phosphatase activity"/>
    <property type="evidence" value="ECO:0000250"/>
    <property type="project" value="UniProtKB"/>
</dbReference>
<dbReference type="CDD" id="cd07516">
    <property type="entry name" value="HAD_Pase"/>
    <property type="match status" value="1"/>
</dbReference>
<dbReference type="FunFam" id="3.30.1240.10:FF:000002">
    <property type="entry name" value="HMP-PP phosphatase"/>
    <property type="match status" value="1"/>
</dbReference>
<dbReference type="Gene3D" id="3.30.1240.10">
    <property type="match status" value="1"/>
</dbReference>
<dbReference type="Gene3D" id="3.40.50.1000">
    <property type="entry name" value="HAD superfamily/HAD-like"/>
    <property type="match status" value="1"/>
</dbReference>
<dbReference type="HAMAP" id="MF_01847">
    <property type="entry name" value="HMP_PP_phosphat"/>
    <property type="match status" value="1"/>
</dbReference>
<dbReference type="InterPro" id="IPR000150">
    <property type="entry name" value="Cof"/>
</dbReference>
<dbReference type="InterPro" id="IPR036412">
    <property type="entry name" value="HAD-like_sf"/>
</dbReference>
<dbReference type="InterPro" id="IPR006379">
    <property type="entry name" value="HAD-SF_hydro_IIB"/>
</dbReference>
<dbReference type="InterPro" id="IPR023214">
    <property type="entry name" value="HAD_sf"/>
</dbReference>
<dbReference type="InterPro" id="IPR023938">
    <property type="entry name" value="HMP-PP_phosphatase"/>
</dbReference>
<dbReference type="NCBIfam" id="TIGR00099">
    <property type="entry name" value="Cof-subfamily"/>
    <property type="match status" value="1"/>
</dbReference>
<dbReference type="NCBIfam" id="TIGR01484">
    <property type="entry name" value="HAD-SF-IIB"/>
    <property type="match status" value="1"/>
</dbReference>
<dbReference type="NCBIfam" id="NF011705">
    <property type="entry name" value="PRK15126.1"/>
    <property type="match status" value="1"/>
</dbReference>
<dbReference type="PANTHER" id="PTHR47267">
    <property type="match status" value="1"/>
</dbReference>
<dbReference type="PANTHER" id="PTHR47267:SF2">
    <property type="entry name" value="HMP-PP PHOSPHATASE"/>
    <property type="match status" value="1"/>
</dbReference>
<dbReference type="Pfam" id="PF08282">
    <property type="entry name" value="Hydrolase_3"/>
    <property type="match status" value="1"/>
</dbReference>
<dbReference type="SFLD" id="SFLDG01140">
    <property type="entry name" value="C2.B:_Phosphomannomutase_and_P"/>
    <property type="match status" value="1"/>
</dbReference>
<dbReference type="SFLD" id="SFLDS00003">
    <property type="entry name" value="Haloacid_Dehalogenase"/>
    <property type="match status" value="1"/>
</dbReference>
<dbReference type="SUPFAM" id="SSF56784">
    <property type="entry name" value="HAD-like"/>
    <property type="match status" value="1"/>
</dbReference>
<dbReference type="PROSITE" id="PS01228">
    <property type="entry name" value="COF_1"/>
    <property type="match status" value="1"/>
</dbReference>
<dbReference type="PROSITE" id="PS01229">
    <property type="entry name" value="COF_2"/>
    <property type="match status" value="1"/>
</dbReference>
<keyword id="KW-0378">Hydrolase</keyword>
<keyword id="KW-0460">Magnesium</keyword>
<keyword id="KW-0479">Metal-binding</keyword>
<keyword id="KW-1185">Reference proteome</keyword>